<feature type="chain" id="PRO_1000076268" description="Histidine--tRNA ligase">
    <location>
        <begin position="1"/>
        <end position="418"/>
    </location>
</feature>
<organism>
    <name type="scientific">Dehalococcoides mccartyi (strain ATCC BAA-2100 / JCM 16839 / KCTC 5957 / BAV1)</name>
    <dbReference type="NCBI Taxonomy" id="216389"/>
    <lineage>
        <taxon>Bacteria</taxon>
        <taxon>Bacillati</taxon>
        <taxon>Chloroflexota</taxon>
        <taxon>Dehalococcoidia</taxon>
        <taxon>Dehalococcoidales</taxon>
        <taxon>Dehalococcoidaceae</taxon>
        <taxon>Dehalococcoides</taxon>
    </lineage>
</organism>
<proteinExistence type="inferred from homology"/>
<accession>A5FSR7</accession>
<sequence>MYQSPRGTEDILPEDQPYWHFVRQQAARIAALYGYQRTDTPVFEDAGLFVRSVGEGTDIVSKEMYTFEDRGGDKLTLRPEGTAPVCRAYLEHGMQTRTKPVKLYYLSSIFRYDRPQAGRYRQHHQFGFEAIGEADASLDAEIIEMAWSFYNLLGITDLSLELNSIGCRQCRPNYISALKDYYQQHAGKLCPDCNTRLDKNTLRLLDCKRAECQAVAGNAPRSADYLCPDCLAHYSRLKECLTILDLPFHENFRLVRGLDYYSRTVFEIQPMAEGAQSTIGGGGRYDGLIEQLGGEATPAMGFATGIERIILNLKRQGIVPSPLPSPAVFLAYMGETASLASFALASDLRKAGIGIYQTYAQKSIKAQLRQANSLGVDWVVILGEEELKQGCAVLRNMKEAGQANIPLDQLICEIKKQI</sequence>
<dbReference type="EC" id="6.1.1.21" evidence="1"/>
<dbReference type="EMBL" id="CP000688">
    <property type="protein sequence ID" value="ABQ16598.1"/>
    <property type="molecule type" value="Genomic_DNA"/>
</dbReference>
<dbReference type="SMR" id="A5FSR7"/>
<dbReference type="KEGG" id="deb:DehaBAV1_0006"/>
<dbReference type="PATRIC" id="fig|216389.18.peg.6"/>
<dbReference type="HOGENOM" id="CLU_025113_1_1_0"/>
<dbReference type="GO" id="GO:0005737">
    <property type="term" value="C:cytoplasm"/>
    <property type="evidence" value="ECO:0007669"/>
    <property type="project" value="UniProtKB-SubCell"/>
</dbReference>
<dbReference type="GO" id="GO:0005524">
    <property type="term" value="F:ATP binding"/>
    <property type="evidence" value="ECO:0007669"/>
    <property type="project" value="UniProtKB-UniRule"/>
</dbReference>
<dbReference type="GO" id="GO:0004821">
    <property type="term" value="F:histidine-tRNA ligase activity"/>
    <property type="evidence" value="ECO:0007669"/>
    <property type="project" value="UniProtKB-UniRule"/>
</dbReference>
<dbReference type="GO" id="GO:0006427">
    <property type="term" value="P:histidyl-tRNA aminoacylation"/>
    <property type="evidence" value="ECO:0007669"/>
    <property type="project" value="UniProtKB-UniRule"/>
</dbReference>
<dbReference type="CDD" id="cd00773">
    <property type="entry name" value="HisRS-like_core"/>
    <property type="match status" value="1"/>
</dbReference>
<dbReference type="CDD" id="cd00859">
    <property type="entry name" value="HisRS_anticodon"/>
    <property type="match status" value="1"/>
</dbReference>
<dbReference type="Gene3D" id="3.40.50.800">
    <property type="entry name" value="Anticodon-binding domain"/>
    <property type="match status" value="1"/>
</dbReference>
<dbReference type="Gene3D" id="3.30.930.10">
    <property type="entry name" value="Bira Bifunctional Protein, Domain 2"/>
    <property type="match status" value="1"/>
</dbReference>
<dbReference type="HAMAP" id="MF_00127">
    <property type="entry name" value="His_tRNA_synth"/>
    <property type="match status" value="1"/>
</dbReference>
<dbReference type="InterPro" id="IPR006195">
    <property type="entry name" value="aa-tRNA-synth_II"/>
</dbReference>
<dbReference type="InterPro" id="IPR045864">
    <property type="entry name" value="aa-tRNA-synth_II/BPL/LPL"/>
</dbReference>
<dbReference type="InterPro" id="IPR004154">
    <property type="entry name" value="Anticodon-bd"/>
</dbReference>
<dbReference type="InterPro" id="IPR036621">
    <property type="entry name" value="Anticodon-bd_dom_sf"/>
</dbReference>
<dbReference type="InterPro" id="IPR015807">
    <property type="entry name" value="His-tRNA-ligase"/>
</dbReference>
<dbReference type="InterPro" id="IPR041715">
    <property type="entry name" value="HisRS-like_core"/>
</dbReference>
<dbReference type="InterPro" id="IPR004516">
    <property type="entry name" value="HisRS/HisZ"/>
</dbReference>
<dbReference type="InterPro" id="IPR033656">
    <property type="entry name" value="HisRS_anticodon"/>
</dbReference>
<dbReference type="NCBIfam" id="TIGR00442">
    <property type="entry name" value="hisS"/>
    <property type="match status" value="1"/>
</dbReference>
<dbReference type="PANTHER" id="PTHR43707:SF1">
    <property type="entry name" value="HISTIDINE--TRNA LIGASE, MITOCHONDRIAL-RELATED"/>
    <property type="match status" value="1"/>
</dbReference>
<dbReference type="PANTHER" id="PTHR43707">
    <property type="entry name" value="HISTIDYL-TRNA SYNTHETASE"/>
    <property type="match status" value="1"/>
</dbReference>
<dbReference type="Pfam" id="PF03129">
    <property type="entry name" value="HGTP_anticodon"/>
    <property type="match status" value="1"/>
</dbReference>
<dbReference type="Pfam" id="PF13393">
    <property type="entry name" value="tRNA-synt_His"/>
    <property type="match status" value="1"/>
</dbReference>
<dbReference type="PIRSF" id="PIRSF001549">
    <property type="entry name" value="His-tRNA_synth"/>
    <property type="match status" value="1"/>
</dbReference>
<dbReference type="SUPFAM" id="SSF52954">
    <property type="entry name" value="Class II aaRS ABD-related"/>
    <property type="match status" value="1"/>
</dbReference>
<dbReference type="SUPFAM" id="SSF55681">
    <property type="entry name" value="Class II aaRS and biotin synthetases"/>
    <property type="match status" value="1"/>
</dbReference>
<dbReference type="PROSITE" id="PS50862">
    <property type="entry name" value="AA_TRNA_LIGASE_II"/>
    <property type="match status" value="1"/>
</dbReference>
<reference key="1">
    <citation type="submission" date="2007-05" db="EMBL/GenBank/DDBJ databases">
        <title>Complete sequence of Dehalococcoides sp. BAV1.</title>
        <authorList>
            <consortium name="US DOE Joint Genome Institute"/>
            <person name="Copeland A."/>
            <person name="Lucas S."/>
            <person name="Lapidus A."/>
            <person name="Barry K."/>
            <person name="Detter J.C."/>
            <person name="Glavina del Rio T."/>
            <person name="Hammon N."/>
            <person name="Israni S."/>
            <person name="Pitluck S."/>
            <person name="Lowry S."/>
            <person name="Clum A."/>
            <person name="Schmutz J."/>
            <person name="Larimer F."/>
            <person name="Land M."/>
            <person name="Hauser L."/>
            <person name="Kyrpides N."/>
            <person name="Kim E."/>
            <person name="Ritalahti K.M."/>
            <person name="Loeffler F."/>
            <person name="Richardson P."/>
        </authorList>
    </citation>
    <scope>NUCLEOTIDE SEQUENCE [LARGE SCALE GENOMIC DNA]</scope>
    <source>
        <strain>ATCC BAA-2100 / JCM 16839 / KCTC 5957 / BAV1</strain>
    </source>
</reference>
<evidence type="ECO:0000255" key="1">
    <source>
        <dbReference type="HAMAP-Rule" id="MF_00127"/>
    </source>
</evidence>
<protein>
    <recommendedName>
        <fullName evidence="1">Histidine--tRNA ligase</fullName>
        <ecNumber evidence="1">6.1.1.21</ecNumber>
    </recommendedName>
    <alternativeName>
        <fullName evidence="1">Histidyl-tRNA synthetase</fullName>
        <shortName evidence="1">HisRS</shortName>
    </alternativeName>
</protein>
<name>SYH_DEHMB</name>
<comment type="catalytic activity">
    <reaction evidence="1">
        <text>tRNA(His) + L-histidine + ATP = L-histidyl-tRNA(His) + AMP + diphosphate + H(+)</text>
        <dbReference type="Rhea" id="RHEA:17313"/>
        <dbReference type="Rhea" id="RHEA-COMP:9665"/>
        <dbReference type="Rhea" id="RHEA-COMP:9689"/>
        <dbReference type="ChEBI" id="CHEBI:15378"/>
        <dbReference type="ChEBI" id="CHEBI:30616"/>
        <dbReference type="ChEBI" id="CHEBI:33019"/>
        <dbReference type="ChEBI" id="CHEBI:57595"/>
        <dbReference type="ChEBI" id="CHEBI:78442"/>
        <dbReference type="ChEBI" id="CHEBI:78527"/>
        <dbReference type="ChEBI" id="CHEBI:456215"/>
        <dbReference type="EC" id="6.1.1.21"/>
    </reaction>
</comment>
<comment type="subunit">
    <text evidence="1">Homodimer.</text>
</comment>
<comment type="subcellular location">
    <subcellularLocation>
        <location evidence="1">Cytoplasm</location>
    </subcellularLocation>
</comment>
<comment type="similarity">
    <text evidence="1">Belongs to the class-II aminoacyl-tRNA synthetase family.</text>
</comment>
<keyword id="KW-0030">Aminoacyl-tRNA synthetase</keyword>
<keyword id="KW-0067">ATP-binding</keyword>
<keyword id="KW-0963">Cytoplasm</keyword>
<keyword id="KW-0436">Ligase</keyword>
<keyword id="KW-0547">Nucleotide-binding</keyword>
<keyword id="KW-0648">Protein biosynthesis</keyword>
<gene>
    <name evidence="1" type="primary">hisS</name>
    <name type="ordered locus">DehaBAV1_0006</name>
</gene>